<accession>Q8KZR4</accession>
<sequence>MALLELERISAQYPGAETPVLADINLSLGPRQLLVALGPSGSGKTSLLNLIAGFVAPSGGRITLDGVPVQGPGAERGVVFQDDALLPWQNVLGNVAFGLELAGVPRAEREAKAREMLALVDLDGFGERRIWQLSGGQKQRVGLARALAADPRVLLMDEPFGALDAFTREQMQELLLQVWQRTAKPVFLITHDIEEAVFLASELVLLAPNPGRVVERLQLDFGQRYAAGESARAIKSDPAFIETREHVLARVFSQRQSLQERA</sequence>
<comment type="function">
    <text evidence="1">Part of the ABC transporter complex TauABC involved in taurine import. Responsible for energy coupling to the transport system.</text>
</comment>
<comment type="catalytic activity">
    <reaction evidence="1">
        <text>taurine(out) + ATP + H2O = taurine(in) + ADP + phosphate + H(+)</text>
        <dbReference type="Rhea" id="RHEA:14613"/>
        <dbReference type="ChEBI" id="CHEBI:15377"/>
        <dbReference type="ChEBI" id="CHEBI:15378"/>
        <dbReference type="ChEBI" id="CHEBI:30616"/>
        <dbReference type="ChEBI" id="CHEBI:43474"/>
        <dbReference type="ChEBI" id="CHEBI:456216"/>
        <dbReference type="ChEBI" id="CHEBI:507393"/>
        <dbReference type="EC" id="7.6.2.7"/>
    </reaction>
</comment>
<comment type="subunit">
    <text evidence="1">The complex is composed of two ATP-binding proteins (TauB), two transmembrane proteins (TauC) and a solute-binding protein (TauA).</text>
</comment>
<comment type="subcellular location">
    <subcellularLocation>
        <location evidence="1">Cell inner membrane</location>
        <topology evidence="1">Peripheral membrane protein</topology>
    </subcellularLocation>
</comment>
<comment type="similarity">
    <text evidence="1">Belongs to the ABC transporter superfamily. Taurine importer (TC 3.A.1.17.1) family.</text>
</comment>
<keyword id="KW-0067">ATP-binding</keyword>
<keyword id="KW-0997">Cell inner membrane</keyword>
<keyword id="KW-1003">Cell membrane</keyword>
<keyword id="KW-0472">Membrane</keyword>
<keyword id="KW-0547">Nucleotide-binding</keyword>
<keyword id="KW-1278">Translocase</keyword>
<keyword id="KW-0813">Transport</keyword>
<protein>
    <recommendedName>
        <fullName evidence="1">Taurine import ATP-binding protein TauB</fullName>
        <ecNumber evidence="1">7.6.2.7</ecNumber>
    </recommendedName>
</protein>
<organism>
    <name type="scientific">Pseudomonas putida</name>
    <name type="common">Arthrobacter siderocapsulatus</name>
    <dbReference type="NCBI Taxonomy" id="303"/>
    <lineage>
        <taxon>Bacteria</taxon>
        <taxon>Pseudomonadati</taxon>
        <taxon>Pseudomonadota</taxon>
        <taxon>Gammaproteobacteria</taxon>
        <taxon>Pseudomonadales</taxon>
        <taxon>Pseudomonadaceae</taxon>
        <taxon>Pseudomonas</taxon>
    </lineage>
</organism>
<name>TAUB_PSEPU</name>
<feature type="chain" id="PRO_0000093013" description="Taurine import ATP-binding protein TauB">
    <location>
        <begin position="1"/>
        <end position="262"/>
    </location>
</feature>
<feature type="domain" description="ABC transporter" evidence="1">
    <location>
        <begin position="4"/>
        <end position="233"/>
    </location>
</feature>
<feature type="binding site" evidence="1">
    <location>
        <begin position="38"/>
        <end position="45"/>
    </location>
    <ligand>
        <name>ATP</name>
        <dbReference type="ChEBI" id="CHEBI:30616"/>
    </ligand>
</feature>
<dbReference type="EC" id="7.6.2.7" evidence="1"/>
<dbReference type="EMBL" id="AB086390">
    <property type="protein sequence ID" value="BAC00967.1"/>
    <property type="molecule type" value="Genomic_DNA"/>
</dbReference>
<dbReference type="RefSeq" id="WP_023660883.1">
    <property type="nucleotide sequence ID" value="NZ_LKKS01000120.1"/>
</dbReference>
<dbReference type="SMR" id="Q8KZR4"/>
<dbReference type="GeneID" id="97165740"/>
<dbReference type="eggNOG" id="COG4525">
    <property type="taxonomic scope" value="Bacteria"/>
</dbReference>
<dbReference type="GO" id="GO:0005886">
    <property type="term" value="C:plasma membrane"/>
    <property type="evidence" value="ECO:0007669"/>
    <property type="project" value="UniProtKB-SubCell"/>
</dbReference>
<dbReference type="GO" id="GO:0015411">
    <property type="term" value="F:ABC-type taurine transporter transporter activity"/>
    <property type="evidence" value="ECO:0007669"/>
    <property type="project" value="UniProtKB-EC"/>
</dbReference>
<dbReference type="GO" id="GO:0005524">
    <property type="term" value="F:ATP binding"/>
    <property type="evidence" value="ECO:0007669"/>
    <property type="project" value="UniProtKB-KW"/>
</dbReference>
<dbReference type="GO" id="GO:0016887">
    <property type="term" value="F:ATP hydrolysis activity"/>
    <property type="evidence" value="ECO:0007669"/>
    <property type="project" value="InterPro"/>
</dbReference>
<dbReference type="CDD" id="cd03293">
    <property type="entry name" value="ABC_NrtD_SsuB_transporters"/>
    <property type="match status" value="1"/>
</dbReference>
<dbReference type="Gene3D" id="3.40.50.300">
    <property type="entry name" value="P-loop containing nucleotide triphosphate hydrolases"/>
    <property type="match status" value="1"/>
</dbReference>
<dbReference type="InterPro" id="IPR003593">
    <property type="entry name" value="AAA+_ATPase"/>
</dbReference>
<dbReference type="InterPro" id="IPR003439">
    <property type="entry name" value="ABC_transporter-like_ATP-bd"/>
</dbReference>
<dbReference type="InterPro" id="IPR017871">
    <property type="entry name" value="ABC_transporter-like_CS"/>
</dbReference>
<dbReference type="InterPro" id="IPR050166">
    <property type="entry name" value="ABC_transporter_ATP-bind"/>
</dbReference>
<dbReference type="InterPro" id="IPR027417">
    <property type="entry name" value="P-loop_NTPase"/>
</dbReference>
<dbReference type="NCBIfam" id="NF008421">
    <property type="entry name" value="PRK11248.1"/>
    <property type="match status" value="1"/>
</dbReference>
<dbReference type="PANTHER" id="PTHR42788:SF18">
    <property type="entry name" value="TAURINE IMPORT ATP-BINDING PROTEIN TAUB"/>
    <property type="match status" value="1"/>
</dbReference>
<dbReference type="PANTHER" id="PTHR42788">
    <property type="entry name" value="TAURINE IMPORT ATP-BINDING PROTEIN-RELATED"/>
    <property type="match status" value="1"/>
</dbReference>
<dbReference type="Pfam" id="PF00005">
    <property type="entry name" value="ABC_tran"/>
    <property type="match status" value="1"/>
</dbReference>
<dbReference type="SMART" id="SM00382">
    <property type="entry name" value="AAA"/>
    <property type="match status" value="1"/>
</dbReference>
<dbReference type="SUPFAM" id="SSF52540">
    <property type="entry name" value="P-loop containing nucleoside triphosphate hydrolases"/>
    <property type="match status" value="1"/>
</dbReference>
<dbReference type="PROSITE" id="PS00211">
    <property type="entry name" value="ABC_TRANSPORTER_1"/>
    <property type="match status" value="1"/>
</dbReference>
<dbReference type="PROSITE" id="PS50893">
    <property type="entry name" value="ABC_TRANSPORTER_2"/>
    <property type="match status" value="1"/>
</dbReference>
<dbReference type="PROSITE" id="PS51250">
    <property type="entry name" value="TAUB"/>
    <property type="match status" value="1"/>
</dbReference>
<proteinExistence type="inferred from homology"/>
<reference key="1">
    <citation type="journal article" date="2003" name="Appl. Microbiol. Biotechnol.">
        <title>Characterization and identification of genes essential for dimethyl sulfide utilization in Pseudomonas putida strain DS1.</title>
        <authorList>
            <person name="Endoh T."/>
            <person name="Kasuga K."/>
            <person name="Horinouchi M."/>
            <person name="Yoshida T."/>
            <person name="Habe H."/>
            <person name="Nojiri H."/>
            <person name="Omori T."/>
        </authorList>
    </citation>
    <scope>NUCLEOTIDE SEQUENCE [GENOMIC DNA]</scope>
    <source>
        <strain>DS1</strain>
    </source>
</reference>
<evidence type="ECO:0000255" key="1">
    <source>
        <dbReference type="HAMAP-Rule" id="MF_01714"/>
    </source>
</evidence>
<gene>
    <name evidence="1" type="primary">tauB</name>
</gene>